<sequence>MTELDHPQHRPNVGVVLFHPDGRVWLGRRHRQAPPYNWQFPQGGVDEGEDLEVAARRELAEETGVTSVELLGRTEGWITYDFPPEVMANPKHARGWRGQKQVWFAYRFVGEESEIDLEADEHIEFDAWRWGRLDETPELIVPFKRGVYEAVVAAFQGFARGDSPVRRREGEN</sequence>
<keyword id="KW-0378">Hydrolase</keyword>
<keyword id="KW-1185">Reference proteome</keyword>
<comment type="function">
    <text evidence="1">Accelerates the degradation of transcripts by removing pyrophosphate from the 5'-end of triphosphorylated RNA, leading to a more labile monophosphorylated state that can stimulate subsequent ribonuclease cleavage.</text>
</comment>
<comment type="cofactor">
    <cofactor evidence="1">
        <name>a divalent metal cation</name>
        <dbReference type="ChEBI" id="CHEBI:60240"/>
    </cofactor>
</comment>
<comment type="similarity">
    <text evidence="1">Belongs to the Nudix hydrolase family. RppH subfamily.</text>
</comment>
<evidence type="ECO:0000255" key="1">
    <source>
        <dbReference type="HAMAP-Rule" id="MF_00298"/>
    </source>
</evidence>
<name>RPPH_CAUVC</name>
<proteinExistence type="inferred from homology"/>
<feature type="chain" id="PRO_0000057002" description="RNA pyrophosphohydrolase">
    <location>
        <begin position="1"/>
        <end position="172"/>
    </location>
</feature>
<feature type="domain" description="Nudix hydrolase" evidence="1">
    <location>
        <begin position="8"/>
        <end position="153"/>
    </location>
</feature>
<feature type="short sequence motif" description="Nudix box">
    <location>
        <begin position="43"/>
        <end position="64"/>
    </location>
</feature>
<dbReference type="EC" id="3.6.1.-" evidence="1"/>
<dbReference type="EMBL" id="AE005673">
    <property type="protein sequence ID" value="AAK25402.1"/>
    <property type="molecule type" value="Genomic_DNA"/>
</dbReference>
<dbReference type="PIR" id="F87675">
    <property type="entry name" value="F87675"/>
</dbReference>
<dbReference type="RefSeq" id="NP_422234.1">
    <property type="nucleotide sequence ID" value="NC_002696.2"/>
</dbReference>
<dbReference type="RefSeq" id="WP_010921269.1">
    <property type="nucleotide sequence ID" value="NC_002696.2"/>
</dbReference>
<dbReference type="SMR" id="Q9A2W6"/>
<dbReference type="STRING" id="190650.CC_3440"/>
<dbReference type="EnsemblBacteria" id="AAK25402">
    <property type="protein sequence ID" value="AAK25402"/>
    <property type="gene ID" value="CC_3440"/>
</dbReference>
<dbReference type="KEGG" id="ccr:CC_3440"/>
<dbReference type="PATRIC" id="fig|190650.5.peg.3450"/>
<dbReference type="eggNOG" id="COG1051">
    <property type="taxonomic scope" value="Bacteria"/>
</dbReference>
<dbReference type="HOGENOM" id="CLU_087195_3_0_5"/>
<dbReference type="BioCyc" id="CAULO:CC3440-MONOMER"/>
<dbReference type="Proteomes" id="UP000001816">
    <property type="component" value="Chromosome"/>
</dbReference>
<dbReference type="GO" id="GO:0034432">
    <property type="term" value="F:bis(5'-adenosyl)-pentaphosphatase activity"/>
    <property type="evidence" value="ECO:0007669"/>
    <property type="project" value="TreeGrafter"/>
</dbReference>
<dbReference type="GO" id="GO:0008893">
    <property type="term" value="F:guanosine-3',5'-bis(diphosphate) 3'-diphosphatase activity"/>
    <property type="evidence" value="ECO:0007669"/>
    <property type="project" value="TreeGrafter"/>
</dbReference>
<dbReference type="GO" id="GO:0006753">
    <property type="term" value="P:nucleoside phosphate metabolic process"/>
    <property type="evidence" value="ECO:0007669"/>
    <property type="project" value="TreeGrafter"/>
</dbReference>
<dbReference type="GO" id="GO:0019693">
    <property type="term" value="P:ribose phosphate metabolic process"/>
    <property type="evidence" value="ECO:0007669"/>
    <property type="project" value="TreeGrafter"/>
</dbReference>
<dbReference type="CDD" id="cd03671">
    <property type="entry name" value="NUDIX_Ap4A_hydrolase_plant_like"/>
    <property type="match status" value="1"/>
</dbReference>
<dbReference type="Gene3D" id="3.90.79.10">
    <property type="entry name" value="Nucleoside Triphosphate Pyrophosphohydrolase"/>
    <property type="match status" value="1"/>
</dbReference>
<dbReference type="HAMAP" id="MF_00298">
    <property type="entry name" value="Nudix_RppH"/>
    <property type="match status" value="1"/>
</dbReference>
<dbReference type="InterPro" id="IPR020476">
    <property type="entry name" value="Nudix_hydrolase"/>
</dbReference>
<dbReference type="InterPro" id="IPR015797">
    <property type="entry name" value="NUDIX_hydrolase-like_dom_sf"/>
</dbReference>
<dbReference type="InterPro" id="IPR020084">
    <property type="entry name" value="NUDIX_hydrolase_CS"/>
</dbReference>
<dbReference type="InterPro" id="IPR000086">
    <property type="entry name" value="NUDIX_hydrolase_dom"/>
</dbReference>
<dbReference type="InterPro" id="IPR022927">
    <property type="entry name" value="RppH"/>
</dbReference>
<dbReference type="NCBIfam" id="NF001938">
    <property type="entry name" value="PRK00714.1-5"/>
    <property type="match status" value="1"/>
</dbReference>
<dbReference type="PANTHER" id="PTHR11839:SF22">
    <property type="entry name" value="NUDIX HYDROLASE 26, CHLOROPLASTIC"/>
    <property type="match status" value="1"/>
</dbReference>
<dbReference type="PANTHER" id="PTHR11839">
    <property type="entry name" value="UDP/ADP-SUGAR PYROPHOSPHATASE"/>
    <property type="match status" value="1"/>
</dbReference>
<dbReference type="Pfam" id="PF00293">
    <property type="entry name" value="NUDIX"/>
    <property type="match status" value="1"/>
</dbReference>
<dbReference type="PRINTS" id="PR00502">
    <property type="entry name" value="NUDIXFAMILY"/>
</dbReference>
<dbReference type="SUPFAM" id="SSF55811">
    <property type="entry name" value="Nudix"/>
    <property type="match status" value="1"/>
</dbReference>
<dbReference type="PROSITE" id="PS51462">
    <property type="entry name" value="NUDIX"/>
    <property type="match status" value="1"/>
</dbReference>
<dbReference type="PROSITE" id="PS00893">
    <property type="entry name" value="NUDIX_BOX"/>
    <property type="match status" value="1"/>
</dbReference>
<protein>
    <recommendedName>
        <fullName evidence="1">RNA pyrophosphohydrolase</fullName>
        <ecNumber evidence="1">3.6.1.-</ecNumber>
    </recommendedName>
    <alternativeName>
        <fullName evidence="1">(Di)nucleoside polyphosphate hydrolase</fullName>
    </alternativeName>
</protein>
<reference key="1">
    <citation type="journal article" date="2001" name="Proc. Natl. Acad. Sci. U.S.A.">
        <title>Complete genome sequence of Caulobacter crescentus.</title>
        <authorList>
            <person name="Nierman W.C."/>
            <person name="Feldblyum T.V."/>
            <person name="Laub M.T."/>
            <person name="Paulsen I.T."/>
            <person name="Nelson K.E."/>
            <person name="Eisen J.A."/>
            <person name="Heidelberg J.F."/>
            <person name="Alley M.R.K."/>
            <person name="Ohta N."/>
            <person name="Maddock J.R."/>
            <person name="Potocka I."/>
            <person name="Nelson W.C."/>
            <person name="Newton A."/>
            <person name="Stephens C."/>
            <person name="Phadke N.D."/>
            <person name="Ely B."/>
            <person name="DeBoy R.T."/>
            <person name="Dodson R.J."/>
            <person name="Durkin A.S."/>
            <person name="Gwinn M.L."/>
            <person name="Haft D.H."/>
            <person name="Kolonay J.F."/>
            <person name="Smit J."/>
            <person name="Craven M.B."/>
            <person name="Khouri H.M."/>
            <person name="Shetty J."/>
            <person name="Berry K.J."/>
            <person name="Utterback T.R."/>
            <person name="Tran K."/>
            <person name="Wolf A.M."/>
            <person name="Vamathevan J.J."/>
            <person name="Ermolaeva M.D."/>
            <person name="White O."/>
            <person name="Salzberg S.L."/>
            <person name="Venter J.C."/>
            <person name="Shapiro L."/>
            <person name="Fraser C.M."/>
        </authorList>
    </citation>
    <scope>NUCLEOTIDE SEQUENCE [LARGE SCALE GENOMIC DNA]</scope>
    <source>
        <strain>ATCC 19089 / CIP 103742 / CB 15</strain>
    </source>
</reference>
<gene>
    <name evidence="1" type="primary">rppH</name>
    <name evidence="1" type="synonym">nudH</name>
    <name type="ordered locus">CC_3440</name>
</gene>
<organism>
    <name type="scientific">Caulobacter vibrioides (strain ATCC 19089 / CIP 103742 / CB 15)</name>
    <name type="common">Caulobacter crescentus</name>
    <dbReference type="NCBI Taxonomy" id="190650"/>
    <lineage>
        <taxon>Bacteria</taxon>
        <taxon>Pseudomonadati</taxon>
        <taxon>Pseudomonadota</taxon>
        <taxon>Alphaproteobacteria</taxon>
        <taxon>Caulobacterales</taxon>
        <taxon>Caulobacteraceae</taxon>
        <taxon>Caulobacter</taxon>
    </lineage>
</organism>
<accession>Q9A2W6</accession>